<keyword id="KW-0007">Acetylation</keyword>
<keyword id="KW-0597">Phosphoprotein</keyword>
<keyword id="KW-1185">Reference proteome</keyword>
<name>NDRG3_BOVIN</name>
<dbReference type="EMBL" id="BC151302">
    <property type="protein sequence ID" value="AAI51303.1"/>
    <property type="molecule type" value="mRNA"/>
</dbReference>
<dbReference type="RefSeq" id="NP_001095466.1">
    <property type="nucleotide sequence ID" value="NM_001101996.1"/>
</dbReference>
<dbReference type="RefSeq" id="XP_024856324.1">
    <property type="nucleotide sequence ID" value="XM_025000556.2"/>
</dbReference>
<dbReference type="SMR" id="A7MB28"/>
<dbReference type="FunCoup" id="A7MB28">
    <property type="interactions" value="2572"/>
</dbReference>
<dbReference type="STRING" id="9913.ENSBTAP00000063734"/>
<dbReference type="ESTHER" id="bovin-ndrg3">
    <property type="family name" value="Ndr_family"/>
</dbReference>
<dbReference type="PaxDb" id="9913-ENSBTAP00000026141"/>
<dbReference type="GeneID" id="514399"/>
<dbReference type="KEGG" id="bta:514399"/>
<dbReference type="CTD" id="57446"/>
<dbReference type="VEuPathDB" id="HostDB:ENSBTAG00000019621"/>
<dbReference type="eggNOG" id="KOG2931">
    <property type="taxonomic scope" value="Eukaryota"/>
</dbReference>
<dbReference type="HOGENOM" id="CLU_035361_1_0_1"/>
<dbReference type="InParanoid" id="A7MB28"/>
<dbReference type="OrthoDB" id="741027at2759"/>
<dbReference type="TreeFam" id="TF313168"/>
<dbReference type="Proteomes" id="UP000009136">
    <property type="component" value="Chromosome 13"/>
</dbReference>
<dbReference type="Bgee" id="ENSBTAG00000019621">
    <property type="expression patterns" value="Expressed in retina and 103 other cell types or tissues"/>
</dbReference>
<dbReference type="GO" id="GO:0005737">
    <property type="term" value="C:cytoplasm"/>
    <property type="evidence" value="ECO:0000318"/>
    <property type="project" value="GO_Central"/>
</dbReference>
<dbReference type="GO" id="GO:0007165">
    <property type="term" value="P:signal transduction"/>
    <property type="evidence" value="ECO:0000318"/>
    <property type="project" value="GO_Central"/>
</dbReference>
<dbReference type="FunFam" id="3.40.50.1820:FF:000006">
    <property type="entry name" value="NDRG family member 3"/>
    <property type="match status" value="1"/>
</dbReference>
<dbReference type="Gene3D" id="3.40.50.1820">
    <property type="entry name" value="alpha/beta hydrolase"/>
    <property type="match status" value="1"/>
</dbReference>
<dbReference type="InterPro" id="IPR029058">
    <property type="entry name" value="AB_hydrolase_fold"/>
</dbReference>
<dbReference type="InterPro" id="IPR004142">
    <property type="entry name" value="NDRG"/>
</dbReference>
<dbReference type="PANTHER" id="PTHR11034">
    <property type="entry name" value="N-MYC DOWNSTREAM REGULATED"/>
    <property type="match status" value="1"/>
</dbReference>
<dbReference type="Pfam" id="PF03096">
    <property type="entry name" value="Ndr"/>
    <property type="match status" value="1"/>
</dbReference>
<dbReference type="SUPFAM" id="SSF53474">
    <property type="entry name" value="alpha/beta-Hydrolases"/>
    <property type="match status" value="1"/>
</dbReference>
<organism>
    <name type="scientific">Bos taurus</name>
    <name type="common">Bovine</name>
    <dbReference type="NCBI Taxonomy" id="9913"/>
    <lineage>
        <taxon>Eukaryota</taxon>
        <taxon>Metazoa</taxon>
        <taxon>Chordata</taxon>
        <taxon>Craniata</taxon>
        <taxon>Vertebrata</taxon>
        <taxon>Euteleostomi</taxon>
        <taxon>Mammalia</taxon>
        <taxon>Eutheria</taxon>
        <taxon>Laurasiatheria</taxon>
        <taxon>Artiodactyla</taxon>
        <taxon>Ruminantia</taxon>
        <taxon>Pecora</taxon>
        <taxon>Bovidae</taxon>
        <taxon>Bovinae</taxon>
        <taxon>Bos</taxon>
    </lineage>
</organism>
<accession>A7MB28</accession>
<feature type="chain" id="PRO_0000357052" description="Protein NDRG3">
    <location>
        <begin position="1"/>
        <end position="375"/>
    </location>
</feature>
<feature type="region of interest" description="Disordered" evidence="3">
    <location>
        <begin position="327"/>
        <end position="375"/>
    </location>
</feature>
<feature type="compositionally biased region" description="Low complexity" evidence="3">
    <location>
        <begin position="330"/>
        <end position="346"/>
    </location>
</feature>
<feature type="compositionally biased region" description="Polar residues" evidence="3">
    <location>
        <begin position="347"/>
        <end position="361"/>
    </location>
</feature>
<feature type="compositionally biased region" description="Basic and acidic residues" evidence="3">
    <location>
        <begin position="364"/>
        <end position="375"/>
    </location>
</feature>
<feature type="modified residue" description="N-acetylmethionine" evidence="2">
    <location>
        <position position="1"/>
    </location>
</feature>
<feature type="modified residue" description="Phosphothreonine" evidence="2">
    <location>
        <position position="322"/>
    </location>
</feature>
<feature type="modified residue" description="Phosphothreonine" evidence="2">
    <location>
        <position position="329"/>
    </location>
</feature>
<feature type="modified residue" description="Phosphoserine" evidence="2">
    <location>
        <position position="331"/>
    </location>
</feature>
<feature type="modified residue" description="Phosphothreonine" evidence="2">
    <location>
        <position position="332"/>
    </location>
</feature>
<feature type="modified residue" description="Phosphoserine" evidence="2">
    <location>
        <position position="334"/>
    </location>
</feature>
<feature type="modified residue" description="Phosphoserine" evidence="2">
    <location>
        <position position="335"/>
    </location>
</feature>
<feature type="modified residue" description="Phosphoserine" evidence="2">
    <location>
        <position position="338"/>
    </location>
</feature>
<feature type="modified residue" description="Phosphoserine" evidence="2">
    <location>
        <position position="341"/>
    </location>
</feature>
<feature type="modified residue" description="Phosphoserine" evidence="2">
    <location>
        <position position="352"/>
    </location>
</feature>
<feature type="modified residue" description="Phosphothreonine" evidence="2">
    <location>
        <position position="355"/>
    </location>
</feature>
<feature type="modified residue" description="Phosphoserine" evidence="1">
    <location>
        <position position="361"/>
    </location>
</feature>
<feature type="modified residue" description="Phosphoserine" evidence="2">
    <location>
        <position position="374"/>
    </location>
</feature>
<reference key="1">
    <citation type="submission" date="2007-07" db="EMBL/GenBank/DDBJ databases">
        <authorList>
            <consortium name="NIH - Mammalian Gene Collection (MGC) project"/>
        </authorList>
    </citation>
    <scope>NUCLEOTIDE SEQUENCE [LARGE SCALE MRNA]</scope>
    <source>
        <strain>Hereford</strain>
        <tissue>Fetal pons</tissue>
    </source>
</reference>
<sequence>MDELQDVQLTEIKPLLNDKNGTRNFQDFDCQEHDIETAHGMVHVTIRGLPKGNRPVILTYHDIGLNHKSCFNAFFNFEDMQEITQHFAVCHVDAPGQQEGAPSFPTGYQYPTMDELAEMLPPVLTHLNLKSIIGIGVGAGAYILSRFALNHPELVEGLVLINVDPCAKGWIDWAASKLSGLTTNVVDIILSHHFGQEELQANLDLIQTYRLHIAQDINQENLQLFLGSYNGRKDLEIERPILGQNDNKSKTLKCSTLLVVGDSSPAVEAVVECNSRLNPVNTTLLKMADCGGLPQVVQPGKLTEAFKYFLQGMGYIPSASMTRLARSRTHSTSSSIGSGESAFSRSVASNQSDGTQESSESPDVLDRHQTMEVSC</sequence>
<protein>
    <recommendedName>
        <fullName>Protein NDRG3</fullName>
    </recommendedName>
    <alternativeName>
        <fullName>N-myc downstream-regulated gene 3 protein</fullName>
    </alternativeName>
</protein>
<comment type="similarity">
    <text evidence="4">Belongs to the NDRG family.</text>
</comment>
<evidence type="ECO:0000250" key="1">
    <source>
        <dbReference type="UniProtKB" id="Q9QYF9"/>
    </source>
</evidence>
<evidence type="ECO:0000250" key="2">
    <source>
        <dbReference type="UniProtKB" id="Q9UGV2"/>
    </source>
</evidence>
<evidence type="ECO:0000256" key="3">
    <source>
        <dbReference type="SAM" id="MobiDB-lite"/>
    </source>
</evidence>
<evidence type="ECO:0000305" key="4"/>
<proteinExistence type="evidence at transcript level"/>
<gene>
    <name type="primary">NDRG3</name>
</gene>